<dbReference type="EMBL" id="X56699">
    <property type="protein sequence ID" value="CAA40029.1"/>
    <property type="molecule type" value="mRNA"/>
</dbReference>
<dbReference type="EMBL" id="X52977">
    <property type="protein sequence ID" value="CAA37169.1"/>
    <property type="molecule type" value="mRNA"/>
</dbReference>
<dbReference type="PIR" id="S13806">
    <property type="entry name" value="S13806"/>
</dbReference>
<dbReference type="SMR" id="P17508"/>
<dbReference type="IntAct" id="P17508">
    <property type="interactions" value="2"/>
</dbReference>
<dbReference type="AGR" id="Xenbase:XB-GENE-17330483"/>
<dbReference type="Xenbase" id="XB-GENE-17330483">
    <property type="gene designation" value="eef1a1o.S"/>
</dbReference>
<dbReference type="Proteomes" id="UP000186698">
    <property type="component" value="Unplaced"/>
</dbReference>
<dbReference type="GO" id="GO:0005737">
    <property type="term" value="C:cytoplasm"/>
    <property type="evidence" value="ECO:0007669"/>
    <property type="project" value="UniProtKB-SubCell"/>
</dbReference>
<dbReference type="GO" id="GO:0005525">
    <property type="term" value="F:GTP binding"/>
    <property type="evidence" value="ECO:0007669"/>
    <property type="project" value="UniProtKB-KW"/>
</dbReference>
<dbReference type="GO" id="GO:0003924">
    <property type="term" value="F:GTPase activity"/>
    <property type="evidence" value="ECO:0000318"/>
    <property type="project" value="GO_Central"/>
</dbReference>
<dbReference type="GO" id="GO:0003746">
    <property type="term" value="F:translation elongation factor activity"/>
    <property type="evidence" value="ECO:0000318"/>
    <property type="project" value="GO_Central"/>
</dbReference>
<dbReference type="GO" id="GO:0006412">
    <property type="term" value="P:translation"/>
    <property type="evidence" value="ECO:0000318"/>
    <property type="project" value="GO_Central"/>
</dbReference>
<dbReference type="GO" id="GO:0006414">
    <property type="term" value="P:translational elongation"/>
    <property type="evidence" value="ECO:0000318"/>
    <property type="project" value="GO_Central"/>
</dbReference>
<dbReference type="CDD" id="cd01883">
    <property type="entry name" value="EF1_alpha"/>
    <property type="match status" value="1"/>
</dbReference>
<dbReference type="CDD" id="cd03693">
    <property type="entry name" value="EF1_alpha_II"/>
    <property type="match status" value="1"/>
</dbReference>
<dbReference type="CDD" id="cd03705">
    <property type="entry name" value="EF1_alpha_III"/>
    <property type="match status" value="1"/>
</dbReference>
<dbReference type="FunFam" id="2.40.30.10:FF:000005">
    <property type="entry name" value="Elongation factor 1-alpha"/>
    <property type="match status" value="1"/>
</dbReference>
<dbReference type="FunFam" id="3.40.50.300:FF:000090">
    <property type="entry name" value="Elongation factor 1-alpha"/>
    <property type="match status" value="1"/>
</dbReference>
<dbReference type="FunFam" id="2.40.30.10:FF:000168">
    <property type="entry name" value="Elongation factor 1-alpha 2"/>
    <property type="match status" value="1"/>
</dbReference>
<dbReference type="Gene3D" id="3.40.50.300">
    <property type="entry name" value="P-loop containing nucleotide triphosphate hydrolases"/>
    <property type="match status" value="1"/>
</dbReference>
<dbReference type="Gene3D" id="2.40.30.10">
    <property type="entry name" value="Translation factors"/>
    <property type="match status" value="2"/>
</dbReference>
<dbReference type="HAMAP" id="MF_00118_A">
    <property type="entry name" value="EF_Tu_A"/>
    <property type="match status" value="1"/>
</dbReference>
<dbReference type="InterPro" id="IPR004161">
    <property type="entry name" value="EFTu-like_2"/>
</dbReference>
<dbReference type="InterPro" id="IPR031157">
    <property type="entry name" value="G_TR_CS"/>
</dbReference>
<dbReference type="InterPro" id="IPR054696">
    <property type="entry name" value="GTP-eEF1A_C"/>
</dbReference>
<dbReference type="InterPro" id="IPR027417">
    <property type="entry name" value="P-loop_NTPase"/>
</dbReference>
<dbReference type="InterPro" id="IPR000795">
    <property type="entry name" value="T_Tr_GTP-bd_dom"/>
</dbReference>
<dbReference type="InterPro" id="IPR050100">
    <property type="entry name" value="TRAFAC_GTPase_members"/>
</dbReference>
<dbReference type="InterPro" id="IPR009000">
    <property type="entry name" value="Transl_B-barrel_sf"/>
</dbReference>
<dbReference type="InterPro" id="IPR009001">
    <property type="entry name" value="Transl_elong_EF1A/Init_IF2_C"/>
</dbReference>
<dbReference type="InterPro" id="IPR004539">
    <property type="entry name" value="Transl_elong_EF1A_euk/arc"/>
</dbReference>
<dbReference type="NCBIfam" id="TIGR00483">
    <property type="entry name" value="EF-1_alpha"/>
    <property type="match status" value="1"/>
</dbReference>
<dbReference type="NCBIfam" id="NF008969">
    <property type="entry name" value="PRK12317.1"/>
    <property type="match status" value="1"/>
</dbReference>
<dbReference type="PANTHER" id="PTHR23115">
    <property type="entry name" value="TRANSLATION FACTOR"/>
    <property type="match status" value="1"/>
</dbReference>
<dbReference type="Pfam" id="PF22594">
    <property type="entry name" value="GTP-eEF1A_C"/>
    <property type="match status" value="1"/>
</dbReference>
<dbReference type="Pfam" id="PF00009">
    <property type="entry name" value="GTP_EFTU"/>
    <property type="match status" value="1"/>
</dbReference>
<dbReference type="Pfam" id="PF03144">
    <property type="entry name" value="GTP_EFTU_D2"/>
    <property type="match status" value="1"/>
</dbReference>
<dbReference type="PRINTS" id="PR00315">
    <property type="entry name" value="ELONGATNFCT"/>
</dbReference>
<dbReference type="SUPFAM" id="SSF50465">
    <property type="entry name" value="EF-Tu/eEF-1alpha/eIF2-gamma C-terminal domain"/>
    <property type="match status" value="1"/>
</dbReference>
<dbReference type="SUPFAM" id="SSF52540">
    <property type="entry name" value="P-loop containing nucleoside triphosphate hydrolases"/>
    <property type="match status" value="1"/>
</dbReference>
<dbReference type="SUPFAM" id="SSF50447">
    <property type="entry name" value="Translation proteins"/>
    <property type="match status" value="1"/>
</dbReference>
<dbReference type="PROSITE" id="PS00301">
    <property type="entry name" value="G_TR_1"/>
    <property type="match status" value="1"/>
</dbReference>
<dbReference type="PROSITE" id="PS51722">
    <property type="entry name" value="G_TR_2"/>
    <property type="match status" value="1"/>
</dbReference>
<accession>P17508</accession>
<sequence length="461" mass="50195">MGKEKIHINIVVIGHVDSGKSTTTGHLIYKCGGIDKRTIEKFEKEAAEMGKGSFKYAWVLDKLKAERERGITIDISLWKFETGKYYITIIDAPGHRDFIKNMITGTSQADCAVLIVAGGVGEFEAGISKNGQTREHALLAFTLGVKQLIIGVNKMDSTEPPFSQKRFEEITKEVSAYIKKIGYNPATVPFVPISGWHGDNMLEASTNMPWFKGWKIERKEGNASGITLLEALDCIIPPQRPTNKPLRLPLQDVYKIGGIGTVPVGRVETGVLKPGMIVTFAPSNVTTEVKSVEMHHEALVEALPGDNVGFNVKNISVKDIRRGNVAGDSKNDPPMQAGSFTAQVIILNHPGQISAGYAPVLDCHTAHIACKFAELKQKIDRRSGKKLEDDPKFLKSGDAAIVEMIPGKPMCVETFSDYPPLGRFAVRDMRQTVAVGVIKGVDKKLASSGKVTKSAAKAGKK</sequence>
<feature type="initiator methionine" description="Removed" evidence="2">
    <location>
        <position position="1"/>
    </location>
</feature>
<feature type="chain" id="PRO_0000090901" description="Elongation factor 1-alpha, oocyte form">
    <location>
        <begin position="2"/>
        <end position="461"/>
    </location>
</feature>
<feature type="domain" description="tr-type G">
    <location>
        <begin position="5"/>
        <end position="242"/>
    </location>
</feature>
<feature type="region of interest" description="G1" evidence="1">
    <location>
        <begin position="14"/>
        <end position="21"/>
    </location>
</feature>
<feature type="region of interest" description="G2" evidence="1">
    <location>
        <begin position="70"/>
        <end position="74"/>
    </location>
</feature>
<feature type="region of interest" description="G3" evidence="1">
    <location>
        <begin position="91"/>
        <end position="94"/>
    </location>
</feature>
<feature type="region of interest" description="G4" evidence="1">
    <location>
        <begin position="153"/>
        <end position="156"/>
    </location>
</feature>
<feature type="region of interest" description="G5" evidence="1">
    <location>
        <begin position="194"/>
        <end position="196"/>
    </location>
</feature>
<feature type="binding site" evidence="1">
    <location>
        <begin position="14"/>
        <end position="21"/>
    </location>
    <ligand>
        <name>GTP</name>
        <dbReference type="ChEBI" id="CHEBI:37565"/>
    </ligand>
</feature>
<feature type="binding site" evidence="1">
    <location>
        <begin position="91"/>
        <end position="95"/>
    </location>
    <ligand>
        <name>GTP</name>
        <dbReference type="ChEBI" id="CHEBI:37565"/>
    </ligand>
</feature>
<feature type="binding site" evidence="1">
    <location>
        <begin position="153"/>
        <end position="156"/>
    </location>
    <ligand>
        <name>GTP</name>
        <dbReference type="ChEBI" id="CHEBI:37565"/>
    </ligand>
</feature>
<feature type="modified residue" description="N,N,N-trimethylglycine" evidence="2">
    <location>
        <position position="2"/>
    </location>
</feature>
<feature type="modified residue" description="5-glutamyl glycerylphosphorylethanolamine" evidence="1">
    <location>
        <position position="301"/>
    </location>
</feature>
<feature type="modified residue" description="5-glutamyl glycerylphosphorylethanolamine" evidence="1">
    <location>
        <position position="374"/>
    </location>
</feature>
<feature type="sequence conflict" description="In Ref. 2; CAA37169." evidence="3" ref="2">
    <original>L</original>
    <variation>F</variation>
    <location>
        <position position="139"/>
    </location>
</feature>
<name>EF1A3_XENLA</name>
<proteinExistence type="evidence at protein level"/>
<protein>
    <recommendedName>
        <fullName>Elongation factor 1-alpha, oocyte form</fullName>
    </recommendedName>
    <alternativeName>
        <fullName>EF-1-alpha-O1</fullName>
        <shortName>EF-1AO1</shortName>
    </alternativeName>
</protein>
<keyword id="KW-0963">Cytoplasm</keyword>
<keyword id="KW-0903">Direct protein sequencing</keyword>
<keyword id="KW-0251">Elongation factor</keyword>
<keyword id="KW-0342">GTP-binding</keyword>
<keyword id="KW-0488">Methylation</keyword>
<keyword id="KW-0547">Nucleotide-binding</keyword>
<keyword id="KW-0597">Phosphoprotein</keyword>
<keyword id="KW-0648">Protein biosynthesis</keyword>
<keyword id="KW-1185">Reference proteome</keyword>
<evidence type="ECO:0000250" key="1"/>
<evidence type="ECO:0000250" key="2">
    <source>
        <dbReference type="UniProtKB" id="P68104"/>
    </source>
</evidence>
<evidence type="ECO:0000305" key="3"/>
<comment type="function">
    <text>This protein promotes the GTP-dependent binding of aminoacyl-tRNA to the A-site of ribosomes during protein biosynthesis.</text>
</comment>
<comment type="subcellular location">
    <subcellularLocation>
        <location>Cytoplasm</location>
    </subcellularLocation>
</comment>
<comment type="tissue specificity">
    <text>Oocyte.</text>
</comment>
<comment type="developmental stage">
    <text>3 EF-1-alpha are expressed under different developmental control in Xenopus laevis.</text>
</comment>
<comment type="similarity">
    <text evidence="3">Belongs to the TRAFAC class translation factor GTPase superfamily. Classic translation factor GTPase family. EF-Tu/EF-1A subfamily.</text>
</comment>
<reference key="1">
    <citation type="journal article" date="1991" name="J. Cell Biol.">
        <title>42Sp48 in previtellogenic Xenopus oocytes is structurally homologous to EF-1 alpha and may be a stage-specific elongation factor.</title>
        <authorList>
            <person name="Coppard N.J."/>
            <person name="Poulsen K."/>
            <person name="Madsen H.O."/>
            <person name="Frydenberg J."/>
            <person name="Clark B.F.C."/>
        </authorList>
    </citation>
    <scope>NUCLEOTIDE SEQUENCE [MRNA]</scope>
</reference>
<reference key="2">
    <citation type="journal article" date="1990" name="Nucleic Acids Res.">
        <title>Three genes under different developmental control encode elongation factor 1-alpha in Xenopus laevis.</title>
        <authorList>
            <person name="Dje M.K."/>
            <person name="Mazabraud A."/>
            <person name="Viel A."/>
            <person name="le Maire M."/>
            <person name="Denis H."/>
            <person name="Crawford E.T."/>
            <person name="Brown D.D."/>
        </authorList>
    </citation>
    <scope>NUCLEOTIDE SEQUENCE [MRNA] OF 8-461</scope>
    <source>
        <tissue>Oocyte</tissue>
    </source>
</reference>
<reference key="3">
    <citation type="journal article" date="1991" name="J. Cell Biol.">
        <title>Two forms of elongation factor 1 alpha (EF-1 alpha O and 42Sp50), present in oocytes, but absent in somatic cells of Xenopus laevis.</title>
        <authorList>
            <person name="Deschamps S."/>
            <person name="Morales J."/>
            <person name="Mazabraud A."/>
            <person name="le Maire M."/>
            <person name="Denis H."/>
            <person name="Brown D.D."/>
        </authorList>
    </citation>
    <scope>PARTIAL PROTEIN SEQUENCE</scope>
</reference>
<organism>
    <name type="scientific">Xenopus laevis</name>
    <name type="common">African clawed frog</name>
    <dbReference type="NCBI Taxonomy" id="8355"/>
    <lineage>
        <taxon>Eukaryota</taxon>
        <taxon>Metazoa</taxon>
        <taxon>Chordata</taxon>
        <taxon>Craniata</taxon>
        <taxon>Vertebrata</taxon>
        <taxon>Euteleostomi</taxon>
        <taxon>Amphibia</taxon>
        <taxon>Batrachia</taxon>
        <taxon>Anura</taxon>
        <taxon>Pipoidea</taxon>
        <taxon>Pipidae</taxon>
        <taxon>Xenopodinae</taxon>
        <taxon>Xenopus</taxon>
        <taxon>Xenopus</taxon>
    </lineage>
</organism>